<organism>
    <name type="scientific">Leuconostoc mesenteroides subsp. mesenteroides (strain ATCC 8293 / DSM 20343 / BCRC 11652 / CCM 1803 / JCM 6124 / NCDO 523 / NBRC 100496 / NCIMB 8023 / NCTC 12954 / NRRL B-1118 / 37Y)</name>
    <dbReference type="NCBI Taxonomy" id="203120"/>
    <lineage>
        <taxon>Bacteria</taxon>
        <taxon>Bacillati</taxon>
        <taxon>Bacillota</taxon>
        <taxon>Bacilli</taxon>
        <taxon>Lactobacillales</taxon>
        <taxon>Lactobacillaceae</taxon>
        <taxon>Leuconostoc</taxon>
    </lineage>
</organism>
<evidence type="ECO:0000255" key="1">
    <source>
        <dbReference type="HAMAP-Rule" id="MF_00502"/>
    </source>
</evidence>
<evidence type="ECO:0000305" key="2"/>
<reference key="1">
    <citation type="journal article" date="2006" name="Proc. Natl. Acad. Sci. U.S.A.">
        <title>Comparative genomics of the lactic acid bacteria.</title>
        <authorList>
            <person name="Makarova K.S."/>
            <person name="Slesarev A."/>
            <person name="Wolf Y.I."/>
            <person name="Sorokin A."/>
            <person name="Mirkin B."/>
            <person name="Koonin E.V."/>
            <person name="Pavlov A."/>
            <person name="Pavlova N."/>
            <person name="Karamychev V."/>
            <person name="Polouchine N."/>
            <person name="Shakhova V."/>
            <person name="Grigoriev I."/>
            <person name="Lou Y."/>
            <person name="Rohksar D."/>
            <person name="Lucas S."/>
            <person name="Huang K."/>
            <person name="Goodstein D.M."/>
            <person name="Hawkins T."/>
            <person name="Plengvidhya V."/>
            <person name="Welker D."/>
            <person name="Hughes J."/>
            <person name="Goh Y."/>
            <person name="Benson A."/>
            <person name="Baldwin K."/>
            <person name="Lee J.-H."/>
            <person name="Diaz-Muniz I."/>
            <person name="Dosti B."/>
            <person name="Smeianov V."/>
            <person name="Wechter W."/>
            <person name="Barabote R."/>
            <person name="Lorca G."/>
            <person name="Altermann E."/>
            <person name="Barrangou R."/>
            <person name="Ganesan B."/>
            <person name="Xie Y."/>
            <person name="Rawsthorne H."/>
            <person name="Tamir D."/>
            <person name="Parker C."/>
            <person name="Breidt F."/>
            <person name="Broadbent J.R."/>
            <person name="Hutkins R."/>
            <person name="O'Sullivan D."/>
            <person name="Steele J."/>
            <person name="Unlu G."/>
            <person name="Saier M.H. Jr."/>
            <person name="Klaenhammer T."/>
            <person name="Richardson P."/>
            <person name="Kozyavkin S."/>
            <person name="Weimer B.C."/>
            <person name="Mills D.A."/>
        </authorList>
    </citation>
    <scope>NUCLEOTIDE SEQUENCE [LARGE SCALE GENOMIC DNA]</scope>
    <source>
        <strain>ATCC 8293 / DSM 20343 / BCRC 11652 / CCM 1803 / JCM 6124 / NCDO 523 / NBRC 100496 / NCIMB 8023 / NCTC 12954 / NRRL B-1118 / 37Y</strain>
    </source>
</reference>
<comment type="subunit">
    <text evidence="1">Part of the 50S ribosomal subunit.</text>
</comment>
<comment type="similarity">
    <text evidence="1">Belongs to the bacterial ribosomal protein bL31 family. Type B subfamily.</text>
</comment>
<feature type="chain" id="PRO_1000014702" description="Large ribosomal subunit protein bL31B">
    <location>
        <begin position="1"/>
        <end position="88"/>
    </location>
</feature>
<dbReference type="EMBL" id="CP000414">
    <property type="protein sequence ID" value="ABJ61566.1"/>
    <property type="molecule type" value="Genomic_DNA"/>
</dbReference>
<dbReference type="RefSeq" id="WP_004164650.1">
    <property type="nucleotide sequence ID" value="NC_008531.1"/>
</dbReference>
<dbReference type="SMR" id="Q03Z06"/>
<dbReference type="EnsemblBacteria" id="ABJ61566">
    <property type="protein sequence ID" value="ABJ61566"/>
    <property type="gene ID" value="LEUM_0450"/>
</dbReference>
<dbReference type="GeneID" id="29576483"/>
<dbReference type="KEGG" id="lme:LEUM_0450"/>
<dbReference type="eggNOG" id="COG0254">
    <property type="taxonomic scope" value="Bacteria"/>
</dbReference>
<dbReference type="HOGENOM" id="CLU_114306_2_1_9"/>
<dbReference type="Proteomes" id="UP000000362">
    <property type="component" value="Chromosome"/>
</dbReference>
<dbReference type="GO" id="GO:1990904">
    <property type="term" value="C:ribonucleoprotein complex"/>
    <property type="evidence" value="ECO:0007669"/>
    <property type="project" value="UniProtKB-KW"/>
</dbReference>
<dbReference type="GO" id="GO:0005840">
    <property type="term" value="C:ribosome"/>
    <property type="evidence" value="ECO:0007669"/>
    <property type="project" value="UniProtKB-KW"/>
</dbReference>
<dbReference type="GO" id="GO:0003735">
    <property type="term" value="F:structural constituent of ribosome"/>
    <property type="evidence" value="ECO:0007669"/>
    <property type="project" value="InterPro"/>
</dbReference>
<dbReference type="GO" id="GO:0006412">
    <property type="term" value="P:translation"/>
    <property type="evidence" value="ECO:0007669"/>
    <property type="project" value="UniProtKB-UniRule"/>
</dbReference>
<dbReference type="Gene3D" id="4.10.830.30">
    <property type="entry name" value="Ribosomal protein L31"/>
    <property type="match status" value="1"/>
</dbReference>
<dbReference type="HAMAP" id="MF_00502">
    <property type="entry name" value="Ribosomal_bL31_2"/>
    <property type="match status" value="1"/>
</dbReference>
<dbReference type="InterPro" id="IPR034704">
    <property type="entry name" value="Ribosomal_bL28/bL31-like_sf"/>
</dbReference>
<dbReference type="InterPro" id="IPR002150">
    <property type="entry name" value="Ribosomal_bL31"/>
</dbReference>
<dbReference type="InterPro" id="IPR027493">
    <property type="entry name" value="Ribosomal_bL31_B"/>
</dbReference>
<dbReference type="InterPro" id="IPR042105">
    <property type="entry name" value="Ribosomal_bL31_sf"/>
</dbReference>
<dbReference type="NCBIfam" id="TIGR00105">
    <property type="entry name" value="L31"/>
    <property type="match status" value="1"/>
</dbReference>
<dbReference type="NCBIfam" id="NF002462">
    <property type="entry name" value="PRK01678.1"/>
    <property type="match status" value="1"/>
</dbReference>
<dbReference type="PANTHER" id="PTHR33280">
    <property type="entry name" value="50S RIBOSOMAL PROTEIN L31, CHLOROPLASTIC"/>
    <property type="match status" value="1"/>
</dbReference>
<dbReference type="PANTHER" id="PTHR33280:SF1">
    <property type="entry name" value="LARGE RIBOSOMAL SUBUNIT PROTEIN BL31C"/>
    <property type="match status" value="1"/>
</dbReference>
<dbReference type="Pfam" id="PF01197">
    <property type="entry name" value="Ribosomal_L31"/>
    <property type="match status" value="1"/>
</dbReference>
<dbReference type="PRINTS" id="PR01249">
    <property type="entry name" value="RIBOSOMALL31"/>
</dbReference>
<dbReference type="SUPFAM" id="SSF143800">
    <property type="entry name" value="L28p-like"/>
    <property type="match status" value="1"/>
</dbReference>
<gene>
    <name evidence="1" type="primary">rpmE2</name>
    <name type="ordered locus">LEUM_0450</name>
</gene>
<protein>
    <recommendedName>
        <fullName evidence="1">Large ribosomal subunit protein bL31B</fullName>
    </recommendedName>
    <alternativeName>
        <fullName evidence="2">50S ribosomal protein L31 type B</fullName>
    </alternativeName>
</protein>
<sequence length="88" mass="9909">MQAEIHPDYRQVVFIDASTGKKFLSASTVTSNDTTDFEGKEYPAIRMDITSDSHPFYTGKQKFTQADGAVDKFNKKFAGFGFKNNEDK</sequence>
<keyword id="KW-1185">Reference proteome</keyword>
<keyword id="KW-0687">Ribonucleoprotein</keyword>
<keyword id="KW-0689">Ribosomal protein</keyword>
<name>RL31B_LEUMM</name>
<accession>Q03Z06</accession>
<proteinExistence type="inferred from homology"/>